<evidence type="ECO:0000255" key="1"/>
<evidence type="ECO:0000255" key="2">
    <source>
        <dbReference type="PROSITE-ProRule" id="PRU00114"/>
    </source>
</evidence>
<evidence type="ECO:0000303" key="3">
    <source>
    </source>
</evidence>
<evidence type="ECO:0000303" key="4">
    <source>
    </source>
</evidence>
<evidence type="ECO:0000303" key="5">
    <source>
    </source>
</evidence>
<evidence type="ECO:0000303" key="6">
    <source>
    </source>
</evidence>
<evidence type="ECO:0000303" key="7">
    <source>
    </source>
</evidence>
<evidence type="ECO:0000303" key="8">
    <source ref="2"/>
</evidence>
<evidence type="ECO:0000305" key="9"/>
<name>TV381_HUMAN</name>
<sequence length="116" mass="13297">MTRVSLLWAVVVSTCLESGMAQTVTQSQPEMSVQEAETVTLSCTYDTSENNYYLFWYKQPPSRQMILVIRQEAYKQQNATENRFSVNFQKAAKSFSLKISDSQLGDTAMYFCAFMK</sequence>
<accession>A0A0B4J264</accession>
<keyword id="KW-1064">Adaptive immunity</keyword>
<keyword id="KW-1003">Cell membrane</keyword>
<keyword id="KW-1015">Disulfide bond</keyword>
<keyword id="KW-0325">Glycoprotein</keyword>
<keyword id="KW-0391">Immunity</keyword>
<keyword id="KW-0393">Immunoglobulin domain</keyword>
<keyword id="KW-0472">Membrane</keyword>
<keyword id="KW-0675">Receptor</keyword>
<keyword id="KW-1185">Reference proteome</keyword>
<keyword id="KW-0732">Signal</keyword>
<keyword id="KW-1279">T cell receptor</keyword>
<proteinExistence type="inferred from homology"/>
<organism>
    <name type="scientific">Homo sapiens</name>
    <name type="common">Human</name>
    <dbReference type="NCBI Taxonomy" id="9606"/>
    <lineage>
        <taxon>Eukaryota</taxon>
        <taxon>Metazoa</taxon>
        <taxon>Chordata</taxon>
        <taxon>Craniata</taxon>
        <taxon>Vertebrata</taxon>
        <taxon>Euteleostomi</taxon>
        <taxon>Mammalia</taxon>
        <taxon>Eutheria</taxon>
        <taxon>Euarchontoglires</taxon>
        <taxon>Primates</taxon>
        <taxon>Haplorrhini</taxon>
        <taxon>Catarrhini</taxon>
        <taxon>Hominidae</taxon>
        <taxon>Homo</taxon>
    </lineage>
</organism>
<comment type="function">
    <text evidence="3 5 6 7">V region of the variable domain of T cell receptor (TR) alpha chain that participates in the antigen recognition (PubMed:24600447). Alpha-beta T cell receptors are antigen specific receptors which are essential to the immune response and are present on the cell surface of T lymphocytes. Recognize peptide-major histocompatibility (MH) (pMH) complexes that are displayed by antigen presenting cells (APC), a prerequisite for efficient T cell adaptive immunity against pathogens (PubMed:25493333). Binding of alpha-beta TR to pMH complex initiates TR-CD3 clustering on the cell surface and intracellular activation of LCK that phosphorylates the ITAM motifs of CD3G, CD3D, CD3E and CD247 enabling the recruitment of ZAP70. In turn ZAP70 phosphorylates LAT, which recruits numerous signaling molecules to form the LAT signalosome. The LAT signalosome propagates signal branching to three major signaling pathways, the calcium, the mitogen-activated protein kinase (MAPK) kinase and the nuclear factor NF-kappa-B (NF-kB) pathways, leading to the mobilization of transcription factors that are critical for gene expression and essential for T cell growth and differentiation (PubMed:23524462). The T cell repertoire is generated in the thymus, by V-(D)-J rearrangement. This repertoire is then shaped by intrathymic selection events to generate a peripheral T cell pool of self-MH restricted, non-autoaggressive T cells. Post-thymic interaction of alpha-beta TR with the pMH complexes shapes TR structural and functional avidity (PubMed:15040585).</text>
</comment>
<comment type="subunit">
    <text evidence="4">Alpha-beta TR is a heterodimer composed of an alpha and beta chain; disulfide-linked. The alpha-beta TR is associated with the transmembrane signaling CD3 coreceptor proteins to form the TR-CD3 (TcR or TCR). The assembly of alpha-beta TR heterodimers with CD3 occurs in the endoplasmic reticulum where a single alpha-beta TR heterodimer associates with one CD3D-CD3E heterodimer, one CD3G-CD3E heterodimer and one CD247 homodimer forming a stable octameric structure. CD3D-CD3E and CD3G-CD3E heterodimers preferentially associate with TR alpha and TR beta chains, respectively. The association of the CD247 homodimer is the last step of TcR assembly in the endoplasmic reticulum and is required for transport to the cell surface.</text>
</comment>
<comment type="subcellular location">
    <subcellularLocation>
        <location evidence="4">Cell membrane</location>
    </subcellularLocation>
</comment>
<comment type="polymorphism">
    <text evidence="9">There are several alleles. The sequence shown is that of IMGT allele TRAV38-1*01.</text>
</comment>
<reference key="1">
    <citation type="journal article" date="2003" name="Nature">
        <title>The DNA sequence and analysis of human chromosome 14.</title>
        <authorList>
            <person name="Heilig R."/>
            <person name="Eckenberg R."/>
            <person name="Petit J.-L."/>
            <person name="Fonknechten N."/>
            <person name="Da Silva C."/>
            <person name="Cattolico L."/>
            <person name="Levy M."/>
            <person name="Barbe V."/>
            <person name="De Berardinis V."/>
            <person name="Ureta-Vidal A."/>
            <person name="Pelletier E."/>
            <person name="Vico V."/>
            <person name="Anthouard V."/>
            <person name="Rowen L."/>
            <person name="Madan A."/>
            <person name="Qin S."/>
            <person name="Sun H."/>
            <person name="Du H."/>
            <person name="Pepin K."/>
            <person name="Artiguenave F."/>
            <person name="Robert C."/>
            <person name="Cruaud C."/>
            <person name="Bruels T."/>
            <person name="Jaillon O."/>
            <person name="Friedlander L."/>
            <person name="Samson G."/>
            <person name="Brottier P."/>
            <person name="Cure S."/>
            <person name="Segurens B."/>
            <person name="Aniere F."/>
            <person name="Samain S."/>
            <person name="Crespeau H."/>
            <person name="Abbasi N."/>
            <person name="Aiach N."/>
            <person name="Boscus D."/>
            <person name="Dickhoff R."/>
            <person name="Dors M."/>
            <person name="Dubois I."/>
            <person name="Friedman C."/>
            <person name="Gouyvenoux M."/>
            <person name="James R."/>
            <person name="Madan A."/>
            <person name="Mairey-Estrada B."/>
            <person name="Mangenot S."/>
            <person name="Martins N."/>
            <person name="Menard M."/>
            <person name="Oztas S."/>
            <person name="Ratcliffe A."/>
            <person name="Shaffer T."/>
            <person name="Trask B."/>
            <person name="Vacherie B."/>
            <person name="Bellemere C."/>
            <person name="Belser C."/>
            <person name="Besnard-Gonnet M."/>
            <person name="Bartol-Mavel D."/>
            <person name="Boutard M."/>
            <person name="Briez-Silla S."/>
            <person name="Combette S."/>
            <person name="Dufosse-Laurent V."/>
            <person name="Ferron C."/>
            <person name="Lechaplais C."/>
            <person name="Louesse C."/>
            <person name="Muselet D."/>
            <person name="Magdelenat G."/>
            <person name="Pateau E."/>
            <person name="Petit E."/>
            <person name="Sirvain-Trukniewicz P."/>
            <person name="Trybou A."/>
            <person name="Vega-Czarny N."/>
            <person name="Bataille E."/>
            <person name="Bluet E."/>
            <person name="Bordelais I."/>
            <person name="Dubois M."/>
            <person name="Dumont C."/>
            <person name="Guerin T."/>
            <person name="Haffray S."/>
            <person name="Hammadi R."/>
            <person name="Muanga J."/>
            <person name="Pellouin V."/>
            <person name="Robert D."/>
            <person name="Wunderle E."/>
            <person name="Gauguet G."/>
            <person name="Roy A."/>
            <person name="Sainte-Marthe L."/>
            <person name="Verdier J."/>
            <person name="Verdier-Discala C."/>
            <person name="Hillier L.W."/>
            <person name="Fulton L."/>
            <person name="McPherson J."/>
            <person name="Matsuda F."/>
            <person name="Wilson R."/>
            <person name="Scarpelli C."/>
            <person name="Gyapay G."/>
            <person name="Wincker P."/>
            <person name="Saurin W."/>
            <person name="Quetier F."/>
            <person name="Waterston R."/>
            <person name="Hood L."/>
            <person name="Weissenbach J."/>
        </authorList>
    </citation>
    <scope>NUCLEOTIDE SEQUENCE [LARGE SCALE GENOMIC DNA] (IMGT ALLELE TRAV38-1*01)</scope>
</reference>
<reference key="2">
    <citation type="book" date="2001" name="The T Cell Receptor FactsBook.">
        <title>The T Cell Receptor FactsBook.</title>
        <editorList>
            <person name="Lefranc M.P."/>
            <person name="Lefranc G."/>
        </editorList>
        <authorList>
            <person name="Lefranc M.P."/>
            <person name="Lefranc G."/>
        </authorList>
    </citation>
    <scope>NOMENCLATURE</scope>
</reference>
<reference key="3">
    <citation type="journal article" date="2004" name="Nat. Rev. Immunol.">
        <title>The many important facets of T-cell repertoire diversity.</title>
        <authorList>
            <person name="Nikolich-Zugich J."/>
            <person name="Slifka M.K."/>
            <person name="Messaoudi I."/>
        </authorList>
    </citation>
    <scope>REVIEW ON T CELL REPERTOIRE DIVERSITY</scope>
</reference>
<reference key="4">
    <citation type="journal article" date="2010" name="Cold Spring Harb. Perspect. Biol.">
        <title>Structural biology of the T-cell receptor: insights into receptor assembly, ligand recognition, and initiation of signaling.</title>
        <authorList>
            <person name="Wucherpfennig K.W."/>
            <person name="Gagnon E."/>
            <person name="Call M.J."/>
            <person name="Huseby E.S."/>
            <person name="Call M.E."/>
        </authorList>
    </citation>
    <scope>REVIEW ON T CELL RECEPTOR-CD3 COMPLEX ASSEMBLY</scope>
    <scope>SUBCELLULAR LOCATION</scope>
</reference>
<reference key="5">
    <citation type="journal article" date="2013" name="Nat. Rev. Immunol.">
        <title>T cell receptor signalling networks: branched, diversified and bounded.</title>
        <authorList>
            <person name="Brownlie R.J."/>
            <person name="Zamoyska R."/>
        </authorList>
    </citation>
    <scope>REVIEW ON T CELL RECEPTOR SIGNALING</scope>
</reference>
<reference key="6">
    <citation type="journal article" date="2014" name="Front. Immunol.">
        <title>Immunoglobulin and T Cell Receptor Genes: IMGT((R)) and the Birth and Rise of Immunoinformatics.</title>
        <authorList>
            <person name="Lefranc M.P."/>
        </authorList>
    </citation>
    <scope>NOMENCLATURE</scope>
</reference>
<reference key="7">
    <citation type="journal article" date="2015" name="Annu. Rev. Immunol.">
        <title>T cell antigen receptor recognition of antigen-presenting molecules.</title>
        <authorList>
            <person name="Rossjohn J."/>
            <person name="Gras S."/>
            <person name="Miles J.J."/>
            <person name="Turner S.J."/>
            <person name="Godfrey D.I."/>
            <person name="McCluskey J."/>
        </authorList>
    </citation>
    <scope>REVIEW ON FUNCTION</scope>
</reference>
<gene>
    <name evidence="8" type="primary">TRAV38-1</name>
</gene>
<protein>
    <recommendedName>
        <fullName evidence="8">T cell receptor alpha variable 38-1</fullName>
    </recommendedName>
</protein>
<feature type="signal peptide" evidence="1">
    <location>
        <begin position="1"/>
        <end position="21"/>
    </location>
</feature>
<feature type="chain" id="PRO_5002105579" description="T cell receptor alpha variable 38-1" evidence="1">
    <location>
        <begin position="22"/>
        <end position="116"/>
    </location>
</feature>
<feature type="domain" description="Ig-like" evidence="2">
    <location>
        <begin position="22"/>
        <end position="116" status="greater than"/>
    </location>
</feature>
<feature type="glycosylation site" description="N-linked (GlcNAc...) asparagine" evidence="1">
    <location>
        <position position="78"/>
    </location>
</feature>
<feature type="disulfide bond" evidence="2">
    <location>
        <begin position="43"/>
        <end position="112"/>
    </location>
</feature>
<feature type="non-terminal residue">
    <location>
        <position position="116"/>
    </location>
</feature>
<dbReference type="EMBL" id="AC245470">
    <property type="status" value="NOT_ANNOTATED_CDS"/>
    <property type="molecule type" value="Genomic_DNA"/>
</dbReference>
<dbReference type="SMR" id="A0A0B4J264"/>
<dbReference type="FunCoup" id="A0A0B4J264">
    <property type="interactions" value="318"/>
</dbReference>
<dbReference type="IMGT_GENE-DB" id="TRAV38-1"/>
<dbReference type="GlyCosmos" id="A0A0B4J264">
    <property type="glycosylation" value="1 site, No reported glycans"/>
</dbReference>
<dbReference type="GlyGen" id="A0A0B4J264">
    <property type="glycosylation" value="1 site"/>
</dbReference>
<dbReference type="BioMuta" id="TRAV38-1"/>
<dbReference type="MassIVE" id="A0A0B4J264"/>
<dbReference type="Ensembl" id="ENST00000390464.2">
    <property type="protein sequence ID" value="ENSP00000450950.1"/>
    <property type="gene ID" value="ENSG00000211816.2"/>
</dbReference>
<dbReference type="AGR" id="HGNC:12137"/>
<dbReference type="GeneCards" id="TRAV38-1"/>
<dbReference type="HGNC" id="HGNC:12137">
    <property type="gene designation" value="TRAV38-1"/>
</dbReference>
<dbReference type="HPA" id="ENSG00000211816">
    <property type="expression patterns" value="Tissue enriched (lymphoid)"/>
</dbReference>
<dbReference type="neXtProt" id="NX_A0A0B4J264"/>
<dbReference type="OpenTargets" id="ENSG00000211816"/>
<dbReference type="VEuPathDB" id="HostDB:ENSG00000211816"/>
<dbReference type="GeneTree" id="ENSGT00940000160147"/>
<dbReference type="HOGENOM" id="CLU_077975_8_1_1"/>
<dbReference type="InParanoid" id="A0A0B4J264"/>
<dbReference type="OMA" id="FCAFMRA"/>
<dbReference type="OrthoDB" id="8947657at2759"/>
<dbReference type="PAN-GO" id="A0A0B4J264">
    <property type="GO annotations" value="3 GO annotations based on evolutionary models"/>
</dbReference>
<dbReference type="PhylomeDB" id="A0A0B4J264"/>
<dbReference type="ChiTaRS" id="TRAV38-1">
    <property type="organism name" value="human"/>
</dbReference>
<dbReference type="Pharos" id="A0A0B4J264">
    <property type="development level" value="Tdark"/>
</dbReference>
<dbReference type="PRO" id="PR:A0A0B4J264"/>
<dbReference type="Proteomes" id="UP000005640">
    <property type="component" value="Chromosome 14"/>
</dbReference>
<dbReference type="RNAct" id="A0A0B4J264">
    <property type="molecule type" value="protein"/>
</dbReference>
<dbReference type="Bgee" id="ENSG00000211816">
    <property type="expression patterns" value="Expressed in lymph node and 65 other cell types or tissues"/>
</dbReference>
<dbReference type="GO" id="GO:0019814">
    <property type="term" value="C:immunoglobulin complex"/>
    <property type="evidence" value="ECO:0000318"/>
    <property type="project" value="GO_Central"/>
</dbReference>
<dbReference type="GO" id="GO:0042101">
    <property type="term" value="C:T cell receptor complex"/>
    <property type="evidence" value="ECO:0007669"/>
    <property type="project" value="UniProtKB-KW"/>
</dbReference>
<dbReference type="GO" id="GO:0002250">
    <property type="term" value="P:adaptive immune response"/>
    <property type="evidence" value="ECO:0007669"/>
    <property type="project" value="UniProtKB-KW"/>
</dbReference>
<dbReference type="GO" id="GO:0006955">
    <property type="term" value="P:immune response"/>
    <property type="evidence" value="ECO:0000318"/>
    <property type="project" value="GO_Central"/>
</dbReference>
<dbReference type="FunFam" id="2.60.40.10:FF:000878">
    <property type="entry name" value="T cell receptor alpha variable 38-1"/>
    <property type="match status" value="1"/>
</dbReference>
<dbReference type="Gene3D" id="2.60.40.10">
    <property type="entry name" value="Immunoglobulins"/>
    <property type="match status" value="1"/>
</dbReference>
<dbReference type="InterPro" id="IPR007110">
    <property type="entry name" value="Ig-like_dom"/>
</dbReference>
<dbReference type="InterPro" id="IPR036179">
    <property type="entry name" value="Ig-like_dom_sf"/>
</dbReference>
<dbReference type="InterPro" id="IPR013783">
    <property type="entry name" value="Ig-like_fold"/>
</dbReference>
<dbReference type="InterPro" id="IPR013106">
    <property type="entry name" value="Ig_V-set"/>
</dbReference>
<dbReference type="InterPro" id="IPR051287">
    <property type="entry name" value="TCR_variable_region"/>
</dbReference>
<dbReference type="PANTHER" id="PTHR19367:SF47">
    <property type="entry name" value="IG-LIKE DOMAIN-CONTAINING PROTEIN"/>
    <property type="match status" value="1"/>
</dbReference>
<dbReference type="PANTHER" id="PTHR19367">
    <property type="entry name" value="T-CELL RECEPTOR ALPHA CHAIN V REGION"/>
    <property type="match status" value="1"/>
</dbReference>
<dbReference type="Pfam" id="PF07686">
    <property type="entry name" value="V-set"/>
    <property type="match status" value="1"/>
</dbReference>
<dbReference type="SMART" id="SM00406">
    <property type="entry name" value="IGv"/>
    <property type="match status" value="1"/>
</dbReference>
<dbReference type="SUPFAM" id="SSF48726">
    <property type="entry name" value="Immunoglobulin"/>
    <property type="match status" value="1"/>
</dbReference>
<dbReference type="PROSITE" id="PS50835">
    <property type="entry name" value="IG_LIKE"/>
    <property type="match status" value="1"/>
</dbReference>